<evidence type="ECO:0000250" key="1"/>
<evidence type="ECO:0000255" key="2">
    <source>
        <dbReference type="HAMAP-Rule" id="MF_00118"/>
    </source>
</evidence>
<gene>
    <name evidence="2" type="primary">tuf1</name>
    <name type="synonym">tufB</name>
    <name type="ordered locus">RHE_CH01658</name>
</gene>
<organism>
    <name type="scientific">Rhizobium etli (strain ATCC 51251 / DSM 11541 / JCM 21823 / NBRC 15573 / CFN 42)</name>
    <dbReference type="NCBI Taxonomy" id="347834"/>
    <lineage>
        <taxon>Bacteria</taxon>
        <taxon>Pseudomonadati</taxon>
        <taxon>Pseudomonadota</taxon>
        <taxon>Alphaproteobacteria</taxon>
        <taxon>Hyphomicrobiales</taxon>
        <taxon>Rhizobiaceae</taxon>
        <taxon>Rhizobium/Agrobacterium group</taxon>
        <taxon>Rhizobium</taxon>
    </lineage>
</organism>
<protein>
    <recommendedName>
        <fullName evidence="2">Elongation factor Tu 1</fullName>
        <shortName evidence="2">EF-Tu 1</shortName>
        <ecNumber evidence="2">3.6.5.3</ecNumber>
    </recommendedName>
</protein>
<comment type="function">
    <text evidence="2">GTP hydrolase that promotes the GTP-dependent binding of aminoacyl-tRNA to the A-site of ribosomes during protein biosynthesis.</text>
</comment>
<comment type="catalytic activity">
    <reaction evidence="2">
        <text>GTP + H2O = GDP + phosphate + H(+)</text>
        <dbReference type="Rhea" id="RHEA:19669"/>
        <dbReference type="ChEBI" id="CHEBI:15377"/>
        <dbReference type="ChEBI" id="CHEBI:15378"/>
        <dbReference type="ChEBI" id="CHEBI:37565"/>
        <dbReference type="ChEBI" id="CHEBI:43474"/>
        <dbReference type="ChEBI" id="CHEBI:58189"/>
        <dbReference type="EC" id="3.6.5.3"/>
    </reaction>
    <physiologicalReaction direction="left-to-right" evidence="2">
        <dbReference type="Rhea" id="RHEA:19670"/>
    </physiologicalReaction>
</comment>
<comment type="subunit">
    <text evidence="2">Monomer.</text>
</comment>
<comment type="subcellular location">
    <subcellularLocation>
        <location evidence="2">Cytoplasm</location>
    </subcellularLocation>
</comment>
<comment type="similarity">
    <text evidence="2">Belongs to the TRAFAC class translation factor GTPase superfamily. Classic translation factor GTPase family. EF-Tu/EF-1A subfamily.</text>
</comment>
<reference key="1">
    <citation type="journal article" date="2006" name="Proc. Natl. Acad. Sci. U.S.A.">
        <title>The partitioned Rhizobium etli genome: genetic and metabolic redundancy in seven interacting replicons.</title>
        <authorList>
            <person name="Gonzalez V."/>
            <person name="Santamaria R.I."/>
            <person name="Bustos P."/>
            <person name="Hernandez-Gonzalez I."/>
            <person name="Medrano-Soto A."/>
            <person name="Moreno-Hagelsieb G."/>
            <person name="Janga S.C."/>
            <person name="Ramirez M.A."/>
            <person name="Jimenez-Jacinto V."/>
            <person name="Collado-Vides J."/>
            <person name="Davila G."/>
        </authorList>
    </citation>
    <scope>NUCLEOTIDE SEQUENCE [LARGE SCALE GENOMIC DNA]</scope>
    <source>
        <strain>ATCC 51251 / DSM 11541 / JCM 21823 / NBRC 15573 / CFN 42</strain>
    </source>
</reference>
<keyword id="KW-0963">Cytoplasm</keyword>
<keyword id="KW-0251">Elongation factor</keyword>
<keyword id="KW-0342">GTP-binding</keyword>
<keyword id="KW-0378">Hydrolase</keyword>
<keyword id="KW-0460">Magnesium</keyword>
<keyword id="KW-0479">Metal-binding</keyword>
<keyword id="KW-0547">Nucleotide-binding</keyword>
<keyword id="KW-0648">Protein biosynthesis</keyword>
<keyword id="KW-1185">Reference proteome</keyword>
<dbReference type="EC" id="3.6.5.3" evidence="2"/>
<dbReference type="EMBL" id="CP000133">
    <property type="protein sequence ID" value="ABC90454.1"/>
    <property type="molecule type" value="Genomic_DNA"/>
</dbReference>
<dbReference type="SMR" id="Q2K9N2"/>
<dbReference type="KEGG" id="ret:RHE_CH01658"/>
<dbReference type="eggNOG" id="COG0050">
    <property type="taxonomic scope" value="Bacteria"/>
</dbReference>
<dbReference type="HOGENOM" id="CLU_007265_0_0_5"/>
<dbReference type="OrthoDB" id="9803139at2"/>
<dbReference type="Proteomes" id="UP000001936">
    <property type="component" value="Chromosome"/>
</dbReference>
<dbReference type="GO" id="GO:0005829">
    <property type="term" value="C:cytosol"/>
    <property type="evidence" value="ECO:0007669"/>
    <property type="project" value="TreeGrafter"/>
</dbReference>
<dbReference type="GO" id="GO:0005525">
    <property type="term" value="F:GTP binding"/>
    <property type="evidence" value="ECO:0007669"/>
    <property type="project" value="UniProtKB-UniRule"/>
</dbReference>
<dbReference type="GO" id="GO:0003924">
    <property type="term" value="F:GTPase activity"/>
    <property type="evidence" value="ECO:0007669"/>
    <property type="project" value="InterPro"/>
</dbReference>
<dbReference type="GO" id="GO:0097216">
    <property type="term" value="F:guanosine tetraphosphate binding"/>
    <property type="evidence" value="ECO:0007669"/>
    <property type="project" value="UniProtKB-ARBA"/>
</dbReference>
<dbReference type="GO" id="GO:0003746">
    <property type="term" value="F:translation elongation factor activity"/>
    <property type="evidence" value="ECO:0007669"/>
    <property type="project" value="UniProtKB-UniRule"/>
</dbReference>
<dbReference type="CDD" id="cd01884">
    <property type="entry name" value="EF_Tu"/>
    <property type="match status" value="1"/>
</dbReference>
<dbReference type="CDD" id="cd03697">
    <property type="entry name" value="EFTU_II"/>
    <property type="match status" value="1"/>
</dbReference>
<dbReference type="CDD" id="cd03707">
    <property type="entry name" value="EFTU_III"/>
    <property type="match status" value="1"/>
</dbReference>
<dbReference type="FunFam" id="2.40.30.10:FF:000001">
    <property type="entry name" value="Elongation factor Tu"/>
    <property type="match status" value="1"/>
</dbReference>
<dbReference type="FunFam" id="3.40.50.300:FF:000003">
    <property type="entry name" value="Elongation factor Tu"/>
    <property type="match status" value="1"/>
</dbReference>
<dbReference type="Gene3D" id="3.40.50.300">
    <property type="entry name" value="P-loop containing nucleotide triphosphate hydrolases"/>
    <property type="match status" value="1"/>
</dbReference>
<dbReference type="Gene3D" id="2.40.30.10">
    <property type="entry name" value="Translation factors"/>
    <property type="match status" value="2"/>
</dbReference>
<dbReference type="HAMAP" id="MF_00118_B">
    <property type="entry name" value="EF_Tu_B"/>
    <property type="match status" value="1"/>
</dbReference>
<dbReference type="InterPro" id="IPR041709">
    <property type="entry name" value="EF-Tu_GTP-bd"/>
</dbReference>
<dbReference type="InterPro" id="IPR050055">
    <property type="entry name" value="EF-Tu_GTPase"/>
</dbReference>
<dbReference type="InterPro" id="IPR004161">
    <property type="entry name" value="EFTu-like_2"/>
</dbReference>
<dbReference type="InterPro" id="IPR033720">
    <property type="entry name" value="EFTU_2"/>
</dbReference>
<dbReference type="InterPro" id="IPR031157">
    <property type="entry name" value="G_TR_CS"/>
</dbReference>
<dbReference type="InterPro" id="IPR027417">
    <property type="entry name" value="P-loop_NTPase"/>
</dbReference>
<dbReference type="InterPro" id="IPR005225">
    <property type="entry name" value="Small_GTP-bd"/>
</dbReference>
<dbReference type="InterPro" id="IPR000795">
    <property type="entry name" value="T_Tr_GTP-bd_dom"/>
</dbReference>
<dbReference type="InterPro" id="IPR009000">
    <property type="entry name" value="Transl_B-barrel_sf"/>
</dbReference>
<dbReference type="InterPro" id="IPR009001">
    <property type="entry name" value="Transl_elong_EF1A/Init_IF2_C"/>
</dbReference>
<dbReference type="InterPro" id="IPR004541">
    <property type="entry name" value="Transl_elong_EFTu/EF1A_bac/org"/>
</dbReference>
<dbReference type="InterPro" id="IPR004160">
    <property type="entry name" value="Transl_elong_EFTu/EF1A_C"/>
</dbReference>
<dbReference type="NCBIfam" id="TIGR00485">
    <property type="entry name" value="EF-Tu"/>
    <property type="match status" value="1"/>
</dbReference>
<dbReference type="NCBIfam" id="NF000766">
    <property type="entry name" value="PRK00049.1"/>
    <property type="match status" value="1"/>
</dbReference>
<dbReference type="NCBIfam" id="NF009372">
    <property type="entry name" value="PRK12735.1"/>
    <property type="match status" value="1"/>
</dbReference>
<dbReference type="NCBIfam" id="NF009373">
    <property type="entry name" value="PRK12736.1"/>
    <property type="match status" value="1"/>
</dbReference>
<dbReference type="NCBIfam" id="TIGR00231">
    <property type="entry name" value="small_GTP"/>
    <property type="match status" value="1"/>
</dbReference>
<dbReference type="PANTHER" id="PTHR43721:SF22">
    <property type="entry name" value="ELONGATION FACTOR TU, MITOCHONDRIAL"/>
    <property type="match status" value="1"/>
</dbReference>
<dbReference type="PANTHER" id="PTHR43721">
    <property type="entry name" value="ELONGATION FACTOR TU-RELATED"/>
    <property type="match status" value="1"/>
</dbReference>
<dbReference type="Pfam" id="PF00009">
    <property type="entry name" value="GTP_EFTU"/>
    <property type="match status" value="1"/>
</dbReference>
<dbReference type="Pfam" id="PF03144">
    <property type="entry name" value="GTP_EFTU_D2"/>
    <property type="match status" value="1"/>
</dbReference>
<dbReference type="Pfam" id="PF03143">
    <property type="entry name" value="GTP_EFTU_D3"/>
    <property type="match status" value="1"/>
</dbReference>
<dbReference type="PRINTS" id="PR00315">
    <property type="entry name" value="ELONGATNFCT"/>
</dbReference>
<dbReference type="SUPFAM" id="SSF50465">
    <property type="entry name" value="EF-Tu/eEF-1alpha/eIF2-gamma C-terminal domain"/>
    <property type="match status" value="1"/>
</dbReference>
<dbReference type="SUPFAM" id="SSF52540">
    <property type="entry name" value="P-loop containing nucleoside triphosphate hydrolases"/>
    <property type="match status" value="1"/>
</dbReference>
<dbReference type="SUPFAM" id="SSF50447">
    <property type="entry name" value="Translation proteins"/>
    <property type="match status" value="1"/>
</dbReference>
<dbReference type="PROSITE" id="PS00301">
    <property type="entry name" value="G_TR_1"/>
    <property type="match status" value="1"/>
</dbReference>
<dbReference type="PROSITE" id="PS51722">
    <property type="entry name" value="G_TR_2"/>
    <property type="match status" value="1"/>
</dbReference>
<proteinExistence type="inferred from homology"/>
<accession>Q2K9N2</accession>
<sequence>MAKSKFERNKPHVNIGTIGHVDHGKTSLTAAITKYFGEFKAYDQIDAAPEEKARGITISTAHVEYETPARHYAHVDCPGHADYVKNMITGAAQMDGAILVCSAADGPMPQTREHILLARQVGVPAIVVFLNKVDQVDDAELLELVELEVRELLSSYDFPGDDIPVVKGSALAALEDSDKKIGEDAIRELMAAVDSYIPTPERPVDQPFLMPIEDVFSISGRGTVVTGRVERGIIKVGEEVEIVGIRPTSKTTVTGVEMFRKLLDQGQAGDNIGALIRGVNRDGVERGQILCKPGSVKPHKKFKAEAYILTKEEGGRHTPFFTNYRPQFYFRTTDVTGIVTLPEGTEMVMPGDNVTVDVELIVPIAMEEKLRFAIREGGRTVGAGIVASIVE</sequence>
<feature type="chain" id="PRO_0000337486" description="Elongation factor Tu 1">
    <location>
        <begin position="1"/>
        <end position="391"/>
    </location>
</feature>
<feature type="domain" description="tr-type G">
    <location>
        <begin position="10"/>
        <end position="201"/>
    </location>
</feature>
<feature type="region of interest" description="G1" evidence="1">
    <location>
        <begin position="19"/>
        <end position="26"/>
    </location>
</feature>
<feature type="region of interest" description="G2" evidence="1">
    <location>
        <begin position="55"/>
        <end position="59"/>
    </location>
</feature>
<feature type="region of interest" description="G3" evidence="1">
    <location>
        <begin position="76"/>
        <end position="79"/>
    </location>
</feature>
<feature type="region of interest" description="G4" evidence="1">
    <location>
        <begin position="131"/>
        <end position="134"/>
    </location>
</feature>
<feature type="region of interest" description="G5" evidence="1">
    <location>
        <begin position="169"/>
        <end position="171"/>
    </location>
</feature>
<feature type="binding site" evidence="2">
    <location>
        <begin position="19"/>
        <end position="26"/>
    </location>
    <ligand>
        <name>GTP</name>
        <dbReference type="ChEBI" id="CHEBI:37565"/>
    </ligand>
</feature>
<feature type="binding site" evidence="2">
    <location>
        <position position="26"/>
    </location>
    <ligand>
        <name>Mg(2+)</name>
        <dbReference type="ChEBI" id="CHEBI:18420"/>
    </ligand>
</feature>
<feature type="binding site" evidence="2">
    <location>
        <begin position="76"/>
        <end position="80"/>
    </location>
    <ligand>
        <name>GTP</name>
        <dbReference type="ChEBI" id="CHEBI:37565"/>
    </ligand>
</feature>
<feature type="binding site" evidence="2">
    <location>
        <begin position="131"/>
        <end position="134"/>
    </location>
    <ligand>
        <name>GTP</name>
        <dbReference type="ChEBI" id="CHEBI:37565"/>
    </ligand>
</feature>
<name>EFTU1_RHIEC</name>